<proteinExistence type="evidence at transcript level"/>
<reference evidence="4" key="1">
    <citation type="journal article" date="2000" name="Int. J. Parasitol.">
        <title>Cloning and characterisation of a peroxiredoxin from the swine roundworm Ascaris suum.</title>
        <authorList>
            <person name="Tsuji N."/>
            <person name="Kasuga-Aoki H."/>
            <person name="Isobe T."/>
            <person name="Yoshihara S."/>
        </authorList>
    </citation>
    <scope>NUCLEOTIDE SEQUENCE [MRNA]</scope>
    <scope>FUNCTION</scope>
    <scope>DEVELOPMENTAL STAGE</scope>
</reference>
<dbReference type="EC" id="1.11.1.24" evidence="1"/>
<dbReference type="EMBL" id="AB022045">
    <property type="protein sequence ID" value="BAA90476.1"/>
    <property type="molecule type" value="mRNA"/>
</dbReference>
<dbReference type="SMR" id="Q9NL98"/>
<dbReference type="BRENDA" id="1.11.1.24">
    <property type="organism ID" value="474"/>
</dbReference>
<dbReference type="GO" id="GO:0005829">
    <property type="term" value="C:cytosol"/>
    <property type="evidence" value="ECO:0007669"/>
    <property type="project" value="TreeGrafter"/>
</dbReference>
<dbReference type="GO" id="GO:0016209">
    <property type="term" value="F:antioxidant activity"/>
    <property type="evidence" value="ECO:0000314"/>
    <property type="project" value="UniProtKB"/>
</dbReference>
<dbReference type="GO" id="GO:0004601">
    <property type="term" value="F:peroxidase activity"/>
    <property type="evidence" value="ECO:0000314"/>
    <property type="project" value="UniProtKB"/>
</dbReference>
<dbReference type="GO" id="GO:0008379">
    <property type="term" value="F:thioredoxin peroxidase activity"/>
    <property type="evidence" value="ECO:0000314"/>
    <property type="project" value="UniProtKB"/>
</dbReference>
<dbReference type="GO" id="GO:0045454">
    <property type="term" value="P:cell redox homeostasis"/>
    <property type="evidence" value="ECO:0007669"/>
    <property type="project" value="TreeGrafter"/>
</dbReference>
<dbReference type="GO" id="GO:0042744">
    <property type="term" value="P:hydrogen peroxide catabolic process"/>
    <property type="evidence" value="ECO:0007669"/>
    <property type="project" value="TreeGrafter"/>
</dbReference>
<dbReference type="GO" id="GO:0019430">
    <property type="term" value="P:removal of superoxide radicals"/>
    <property type="evidence" value="ECO:0007669"/>
    <property type="project" value="TreeGrafter"/>
</dbReference>
<dbReference type="GO" id="GO:0006979">
    <property type="term" value="P:response to oxidative stress"/>
    <property type="evidence" value="ECO:0000314"/>
    <property type="project" value="UniProtKB"/>
</dbReference>
<dbReference type="CDD" id="cd03015">
    <property type="entry name" value="PRX_Typ2cys"/>
    <property type="match status" value="1"/>
</dbReference>
<dbReference type="FunFam" id="3.40.30.10:FF:000003">
    <property type="entry name" value="Peroxiredoxin 1"/>
    <property type="match status" value="1"/>
</dbReference>
<dbReference type="Gene3D" id="3.40.30.10">
    <property type="entry name" value="Glutaredoxin"/>
    <property type="match status" value="1"/>
</dbReference>
<dbReference type="InterPro" id="IPR000866">
    <property type="entry name" value="AhpC/TSA"/>
</dbReference>
<dbReference type="InterPro" id="IPR050217">
    <property type="entry name" value="Peroxiredoxin"/>
</dbReference>
<dbReference type="InterPro" id="IPR024706">
    <property type="entry name" value="Peroxiredoxin_AhpC-typ"/>
</dbReference>
<dbReference type="InterPro" id="IPR019479">
    <property type="entry name" value="Peroxiredoxin_C"/>
</dbReference>
<dbReference type="InterPro" id="IPR036249">
    <property type="entry name" value="Thioredoxin-like_sf"/>
</dbReference>
<dbReference type="InterPro" id="IPR013766">
    <property type="entry name" value="Thioredoxin_domain"/>
</dbReference>
<dbReference type="PANTHER" id="PTHR10681:SF163">
    <property type="entry name" value="AT16346P-RELATED"/>
    <property type="match status" value="1"/>
</dbReference>
<dbReference type="PANTHER" id="PTHR10681">
    <property type="entry name" value="THIOREDOXIN PEROXIDASE"/>
    <property type="match status" value="1"/>
</dbReference>
<dbReference type="Pfam" id="PF10417">
    <property type="entry name" value="1-cysPrx_C"/>
    <property type="match status" value="1"/>
</dbReference>
<dbReference type="Pfam" id="PF00578">
    <property type="entry name" value="AhpC-TSA"/>
    <property type="match status" value="1"/>
</dbReference>
<dbReference type="PIRSF" id="PIRSF000239">
    <property type="entry name" value="AHPC"/>
    <property type="match status" value="1"/>
</dbReference>
<dbReference type="SUPFAM" id="SSF52833">
    <property type="entry name" value="Thioredoxin-like"/>
    <property type="match status" value="1"/>
</dbReference>
<dbReference type="PROSITE" id="PS51352">
    <property type="entry name" value="THIOREDOXIN_2"/>
    <property type="match status" value="1"/>
</dbReference>
<name>PRDX_ASCSU</name>
<feature type="chain" id="PRO_0000135084" description="Peroxiredoxin">
    <location>
        <begin position="1"/>
        <end position="195"/>
    </location>
</feature>
<feature type="domain" description="Thioredoxin" evidence="2">
    <location>
        <begin position="4"/>
        <end position="162"/>
    </location>
</feature>
<feature type="active site" description="Cysteine sulfenic acid (-SOH) intermediate" evidence="1">
    <location>
        <position position="49"/>
    </location>
</feature>
<feature type="disulfide bond" description="Interchain (with C-170); in linked form" evidence="1">
    <location>
        <position position="49"/>
    </location>
</feature>
<feature type="disulfide bond" description="Interchain (with C-49); in linked form" evidence="1">
    <location>
        <position position="170"/>
    </location>
</feature>
<sequence>MSKAMIGKPAPEFTATAVVDGDFKSISLSDYKGKYVVLFFYPMDFTFVCPTEIIAFSEHVGEFKKLGVEVLAASTDSQFSHLAWINTPRKQGGLGEMKIPIISDNNHQISRDYGVLKEDDGIAYRGLFIIDPKGILRQITVNDLPVGRSVTETLRLVQAFQFVDKHGEVCPAGWTPGADTIKPGVKESKAYFEKH</sequence>
<evidence type="ECO:0000250" key="1">
    <source>
        <dbReference type="UniProtKB" id="Q06830"/>
    </source>
</evidence>
<evidence type="ECO:0000255" key="2">
    <source>
        <dbReference type="PROSITE-ProRule" id="PRU00691"/>
    </source>
</evidence>
<evidence type="ECO:0000269" key="3">
    <source>
    </source>
</evidence>
<evidence type="ECO:0000305" key="4"/>
<evidence type="ECO:0000312" key="5">
    <source>
        <dbReference type="EMBL" id="BAA90476.1"/>
    </source>
</evidence>
<accession>Q9NL98</accession>
<comment type="function">
    <text evidence="3">Thiol-specific peroxidase that catalyzes the reduction of hydrogen peroxide and organic hydroperoxides to water and alcohols, respectively. Plays a role in cell protection against oxidative stress by detoxifying peroxides and as sensor of hydrogen peroxide-mediated signaling events.</text>
</comment>
<comment type="catalytic activity">
    <reaction evidence="1">
        <text>a hydroperoxide + [thioredoxin]-dithiol = an alcohol + [thioredoxin]-disulfide + H2O</text>
        <dbReference type="Rhea" id="RHEA:62620"/>
        <dbReference type="Rhea" id="RHEA-COMP:10698"/>
        <dbReference type="Rhea" id="RHEA-COMP:10700"/>
        <dbReference type="ChEBI" id="CHEBI:15377"/>
        <dbReference type="ChEBI" id="CHEBI:29950"/>
        <dbReference type="ChEBI" id="CHEBI:30879"/>
        <dbReference type="ChEBI" id="CHEBI:35924"/>
        <dbReference type="ChEBI" id="CHEBI:50058"/>
        <dbReference type="EC" id="1.11.1.24"/>
    </reaction>
</comment>
<comment type="subunit">
    <text evidence="1">Homodimer; disulfide-linked, upon oxidation.</text>
</comment>
<comment type="developmental stage">
    <text evidence="3">Expressed in eggs, larvae, and in male and female adult worms.</text>
</comment>
<comment type="miscellaneous">
    <text evidence="1">The active site is a conserved redox-active cysteine residue, the peroxidatic cysteine (C(P)), which makes the nucleophilic attack on the peroxide substrate. The peroxide oxidizes the C(P)-SH to cysteine sulfenic acid (C(P)-SOH), which then reacts with another cysteine residue, the resolving cysteine (C(R)), to form a disulfide bridge. The disulfide is subsequently reduced by an appropriate electron donor to complete the catalytic cycle. In this typical 2-Cys peroxiredoxin, C(R) is provided by the other dimeric subunit to form an intersubunit disulfide. The disulfide is subsequently reduced by thioredoxin.</text>
</comment>
<comment type="similarity">
    <text evidence="4">Belongs to the peroxiredoxin family. AhpC/Prx1 subfamily.</text>
</comment>
<organism evidence="5">
    <name type="scientific">Ascaris suum</name>
    <name type="common">Pig roundworm</name>
    <name type="synonym">Ascaris lumbricoides</name>
    <dbReference type="NCBI Taxonomy" id="6253"/>
    <lineage>
        <taxon>Eukaryota</taxon>
        <taxon>Metazoa</taxon>
        <taxon>Ecdysozoa</taxon>
        <taxon>Nematoda</taxon>
        <taxon>Chromadorea</taxon>
        <taxon>Rhabditida</taxon>
        <taxon>Spirurina</taxon>
        <taxon>Ascaridomorpha</taxon>
        <taxon>Ascaridoidea</taxon>
        <taxon>Ascarididae</taxon>
        <taxon>Ascaris</taxon>
    </lineage>
</organism>
<keyword id="KW-0049">Antioxidant</keyword>
<keyword id="KW-1015">Disulfide bond</keyword>
<keyword id="KW-0560">Oxidoreductase</keyword>
<keyword id="KW-0575">Peroxidase</keyword>
<keyword id="KW-0676">Redox-active center</keyword>
<protein>
    <recommendedName>
        <fullName>Peroxiredoxin</fullName>
        <ecNumber evidence="1">1.11.1.24</ecNumber>
    </recommendedName>
    <alternativeName>
        <fullName>AsPrx</fullName>
    </alternativeName>
    <alternativeName>
        <fullName>Thioredoxin peroxidase</fullName>
    </alternativeName>
    <alternativeName>
        <fullName evidence="4">Thioredoxin-dependent peroxiredoxin</fullName>
    </alternativeName>
</protein>